<accession>B1IP33</accession>
<organism>
    <name type="scientific">Escherichia coli (strain ATCC 8739 / DSM 1576 / NBRC 3972 / NCIMB 8545 / WDCM 00012 / Crooks)</name>
    <dbReference type="NCBI Taxonomy" id="481805"/>
    <lineage>
        <taxon>Bacteria</taxon>
        <taxon>Pseudomonadati</taxon>
        <taxon>Pseudomonadota</taxon>
        <taxon>Gammaproteobacteria</taxon>
        <taxon>Enterobacterales</taxon>
        <taxon>Enterobacteriaceae</taxon>
        <taxon>Escherichia</taxon>
    </lineage>
</organism>
<sequence>MTQLAIGKPAPLGAHYDGQGVNFTLFSVHAERVELCVFDANGQEHRYDLPGHSGDIWHGYLPDARPGLRYGYRVHGPWQPAEGHRFNPAKLLIDPCARQIDGEFKDNPLLHAGHNEPDYRDNAAIAPKCVVVVDHYDWEDDAPPRTPWGSTIIYEAHVKGLTYLHPEIPVEIRGTYKALGHPVMINYLKQLGITALELLPVAQFASEPRLQRMGLSNYWGYNPVAMFALHPAYACSPETALDEFRDAIKALHKAGIEVILDIVLNHSAELDLDGPLFSLRGIDNRSYYWIREDGDYHNWTGCGNTLNLSHPAVVDYASACLRYWVETCHVDGFRFDLAAVMGRTPEFRQDAPLFTAIQNCPVLSQVKLIAEPWDIAPGGYQVGNFPPLFAEWNDHFRDAARRFWLHYDLPLGAFAGRFAASSDVFKRNGRLPSAAINLVTAHDGFTLRDCVCFNHKHNEANGEENRDGTNNNYSNNHGKEGLGGTLDLVERRRDSIHALLTTLLLSQGTPMLLAGDEHGHSQHGNNNAYCQDNQLTWLDWSQASSGLTAFTAALIHLRKRIPALVENRWWEEGDGNVRWLNRYAQPLSTDEWQNGPKQLQILLSDRFLIAINATLEVTEIVLPAGEWHAIPPFAGEDNPVITAVWQGPAHGLCVFQR</sequence>
<reference key="1">
    <citation type="submission" date="2008-02" db="EMBL/GenBank/DDBJ databases">
        <title>Complete sequence of Escherichia coli C str. ATCC 8739.</title>
        <authorList>
            <person name="Copeland A."/>
            <person name="Lucas S."/>
            <person name="Lapidus A."/>
            <person name="Glavina del Rio T."/>
            <person name="Dalin E."/>
            <person name="Tice H."/>
            <person name="Bruce D."/>
            <person name="Goodwin L."/>
            <person name="Pitluck S."/>
            <person name="Kiss H."/>
            <person name="Brettin T."/>
            <person name="Detter J.C."/>
            <person name="Han C."/>
            <person name="Kuske C.R."/>
            <person name="Schmutz J."/>
            <person name="Larimer F."/>
            <person name="Land M."/>
            <person name="Hauser L."/>
            <person name="Kyrpides N."/>
            <person name="Mikhailova N."/>
            <person name="Ingram L."/>
            <person name="Richardson P."/>
        </authorList>
    </citation>
    <scope>NUCLEOTIDE SEQUENCE [LARGE SCALE GENOMIC DNA]</scope>
    <source>
        <strain>ATCC 8739 / DSM 1576 / NBRC 3972 / NCIMB 8545 / WDCM 00012 / Crooks</strain>
    </source>
</reference>
<protein>
    <recommendedName>
        <fullName evidence="1">Glycogen debranching enzyme</fullName>
        <ecNumber evidence="1">3.2.1.196</ecNumber>
    </recommendedName>
    <alternativeName>
        <fullName evidence="1">Limit dextrin alpha-1,6-maltotetraose-hydrolase</fullName>
    </alternativeName>
</protein>
<proteinExistence type="inferred from homology"/>
<evidence type="ECO:0000255" key="1">
    <source>
        <dbReference type="HAMAP-Rule" id="MF_01248"/>
    </source>
</evidence>
<evidence type="ECO:0000256" key="2">
    <source>
        <dbReference type="SAM" id="MobiDB-lite"/>
    </source>
</evidence>
<name>GLGX_ECOLC</name>
<gene>
    <name evidence="1" type="primary">glgX</name>
    <name type="ordered locus">EcolC_0281</name>
</gene>
<dbReference type="EC" id="3.2.1.196" evidence="1"/>
<dbReference type="EMBL" id="CP000946">
    <property type="protein sequence ID" value="ACA75959.1"/>
    <property type="molecule type" value="Genomic_DNA"/>
</dbReference>
<dbReference type="RefSeq" id="WP_000192559.1">
    <property type="nucleotide sequence ID" value="NZ_MTFT01000001.1"/>
</dbReference>
<dbReference type="SMR" id="B1IP33"/>
<dbReference type="CAZy" id="CBM48">
    <property type="family name" value="Carbohydrate-Binding Module Family 48"/>
</dbReference>
<dbReference type="CAZy" id="GH13">
    <property type="family name" value="Glycoside Hydrolase Family 13"/>
</dbReference>
<dbReference type="KEGG" id="ecl:EcolC_0281"/>
<dbReference type="HOGENOM" id="CLU_011725_1_1_6"/>
<dbReference type="UniPathway" id="UPA00165"/>
<dbReference type="GO" id="GO:0004133">
    <property type="term" value="F:glycogen debranching enzyme activity"/>
    <property type="evidence" value="ECO:0007669"/>
    <property type="project" value="UniProtKB-UniRule"/>
</dbReference>
<dbReference type="GO" id="GO:0004553">
    <property type="term" value="F:hydrolase activity, hydrolyzing O-glycosyl compounds"/>
    <property type="evidence" value="ECO:0007669"/>
    <property type="project" value="InterPro"/>
</dbReference>
<dbReference type="GO" id="GO:0005980">
    <property type="term" value="P:glycogen catabolic process"/>
    <property type="evidence" value="ECO:0007669"/>
    <property type="project" value="UniProtKB-UniRule"/>
</dbReference>
<dbReference type="CDD" id="cd11326">
    <property type="entry name" value="AmyAc_Glg_debranch"/>
    <property type="match status" value="1"/>
</dbReference>
<dbReference type="CDD" id="cd02856">
    <property type="entry name" value="E_set_GDE_Isoamylase_N"/>
    <property type="match status" value="1"/>
</dbReference>
<dbReference type="FunFam" id="2.60.40.10:FF:000468">
    <property type="entry name" value="Glycogen debranching enzyme"/>
    <property type="match status" value="1"/>
</dbReference>
<dbReference type="FunFam" id="3.20.20.80:FF:000031">
    <property type="entry name" value="Glycogen debranching enzyme"/>
    <property type="match status" value="1"/>
</dbReference>
<dbReference type="Gene3D" id="3.20.20.80">
    <property type="entry name" value="Glycosidases"/>
    <property type="match status" value="1"/>
</dbReference>
<dbReference type="Gene3D" id="2.60.40.1180">
    <property type="entry name" value="Golgi alpha-mannosidase II"/>
    <property type="match status" value="1"/>
</dbReference>
<dbReference type="Gene3D" id="2.60.40.10">
    <property type="entry name" value="Immunoglobulins"/>
    <property type="match status" value="1"/>
</dbReference>
<dbReference type="HAMAP" id="MF_01248">
    <property type="entry name" value="GlgX"/>
    <property type="match status" value="1"/>
</dbReference>
<dbReference type="InterPro" id="IPR040784">
    <property type="entry name" value="GlgX_C"/>
</dbReference>
<dbReference type="InterPro" id="IPR044505">
    <property type="entry name" value="GlgX_Isoamylase_N_E_set"/>
</dbReference>
<dbReference type="InterPro" id="IPR006047">
    <property type="entry name" value="Glyco_hydro_13_cat_dom"/>
</dbReference>
<dbReference type="InterPro" id="IPR004193">
    <property type="entry name" value="Glyco_hydro_13_N"/>
</dbReference>
<dbReference type="InterPro" id="IPR013780">
    <property type="entry name" value="Glyco_hydro_b"/>
</dbReference>
<dbReference type="InterPro" id="IPR022844">
    <property type="entry name" value="Glycogen_debranch_bac"/>
</dbReference>
<dbReference type="InterPro" id="IPR011837">
    <property type="entry name" value="Glycogen_debranch_GlgX"/>
</dbReference>
<dbReference type="InterPro" id="IPR017853">
    <property type="entry name" value="Glycoside_hydrolase_SF"/>
</dbReference>
<dbReference type="InterPro" id="IPR013783">
    <property type="entry name" value="Ig-like_fold"/>
</dbReference>
<dbReference type="InterPro" id="IPR014756">
    <property type="entry name" value="Ig_E-set"/>
</dbReference>
<dbReference type="NCBIfam" id="TIGR02100">
    <property type="entry name" value="glgX_debranch"/>
    <property type="match status" value="1"/>
</dbReference>
<dbReference type="NCBIfam" id="NF002983">
    <property type="entry name" value="PRK03705.1"/>
    <property type="match status" value="1"/>
</dbReference>
<dbReference type="PANTHER" id="PTHR43002">
    <property type="entry name" value="GLYCOGEN DEBRANCHING ENZYME"/>
    <property type="match status" value="1"/>
</dbReference>
<dbReference type="Pfam" id="PF00128">
    <property type="entry name" value="Alpha-amylase"/>
    <property type="match status" value="1"/>
</dbReference>
<dbReference type="Pfam" id="PF02922">
    <property type="entry name" value="CBM_48"/>
    <property type="match status" value="1"/>
</dbReference>
<dbReference type="Pfam" id="PF18390">
    <property type="entry name" value="GlgX_C"/>
    <property type="match status" value="1"/>
</dbReference>
<dbReference type="SMART" id="SM00642">
    <property type="entry name" value="Aamy"/>
    <property type="match status" value="1"/>
</dbReference>
<dbReference type="SUPFAM" id="SSF51445">
    <property type="entry name" value="(Trans)glycosidases"/>
    <property type="match status" value="1"/>
</dbReference>
<dbReference type="SUPFAM" id="SSF81296">
    <property type="entry name" value="E set domains"/>
    <property type="match status" value="1"/>
</dbReference>
<comment type="function">
    <text evidence="1">Removes maltotriose and maltotetraose chains that are attached by 1,6-alpha-linkage to the limit dextrin main chain, generating a debranched limit dextrin.</text>
</comment>
<comment type="catalytic activity">
    <reaction evidence="1">
        <text>Hydrolysis of (1-&gt;6)-alpha-D-glucosidic linkages to branches with degrees of polymerization of three or four glucose residues in limit dextrin.</text>
        <dbReference type="EC" id="3.2.1.196"/>
    </reaction>
</comment>
<comment type="pathway">
    <text evidence="1">Glycan degradation; glycogen degradation.</text>
</comment>
<comment type="similarity">
    <text evidence="1">Belongs to the glycosyl hydrolase 13 family.</text>
</comment>
<keyword id="KW-0119">Carbohydrate metabolism</keyword>
<keyword id="KW-0321">Glycogen metabolism</keyword>
<keyword id="KW-0326">Glycosidase</keyword>
<keyword id="KW-0378">Hydrolase</keyword>
<feature type="chain" id="PRO_1000085788" description="Glycogen debranching enzyme">
    <location>
        <begin position="1"/>
        <end position="657"/>
    </location>
</feature>
<feature type="region of interest" description="Disordered" evidence="2">
    <location>
        <begin position="460"/>
        <end position="479"/>
    </location>
</feature>
<feature type="active site" description="Nucleophile" evidence="1">
    <location>
        <position position="336"/>
    </location>
</feature>
<feature type="active site" description="Proton donor" evidence="1">
    <location>
        <position position="371"/>
    </location>
</feature>
<feature type="site" description="Transition state stabilizer" evidence="1">
    <location>
        <position position="443"/>
    </location>
</feature>